<reference key="1">
    <citation type="submission" date="2009-08" db="EMBL/GenBank/DDBJ databases">
        <authorList>
            <person name="Cheung F."/>
            <person name="Xiao Y."/>
            <person name="Chan A."/>
            <person name="Moskal W."/>
            <person name="Town C.D."/>
        </authorList>
    </citation>
    <scope>NUCLEOTIDE SEQUENCE [LARGE SCALE MRNA]</scope>
</reference>
<reference key="2">
    <citation type="journal article" date="2014" name="Plant Physiol.">
        <title>Functional and evolutionary analysis of the CASPARIAN STRIP MEMBRANE DOMAIN PROTEIN family.</title>
        <authorList>
            <person name="Roppolo D."/>
            <person name="Boeckmann B."/>
            <person name="Pfister A."/>
            <person name="Boutet E."/>
            <person name="Rubio M.C."/>
            <person name="Denervaud-Tendon V."/>
            <person name="Vermeer J.E."/>
            <person name="Gheyselinck J."/>
            <person name="Xenarios I."/>
            <person name="Geldner N."/>
        </authorList>
    </citation>
    <scope>GENE FAMILY</scope>
    <scope>NOMENCLATURE</scope>
</reference>
<comment type="subunit">
    <text evidence="1">Homodimer and heterodimers.</text>
</comment>
<comment type="subcellular location">
    <subcellularLocation>
        <location evidence="1">Cell membrane</location>
        <topology evidence="1">Multi-pass membrane protein</topology>
    </subcellularLocation>
</comment>
<comment type="similarity">
    <text evidence="3">Belongs to the Casparian strip membrane proteins (CASP) family.</text>
</comment>
<protein>
    <recommendedName>
        <fullName>CASP-like protein 1D1</fullName>
        <shortName>GmCASPL1D1</shortName>
    </recommendedName>
</protein>
<sequence>MASTDKHGDTEYRTSSSTPAPAGVDYFKFDVILRFVLFAASLVAVVVIVTGNQTEVILVPQPVPWPAKFRYTPAFVYFVAALSVTGLYSIITTLASLFASNKPALKTKLLPYFILWDALILGIIASATGTAGGVAYLGLKGNSHVVGWNKICHVYDKFCRHVGASIAVALFGSIVTVLLIWLSAYSIHSRVPK</sequence>
<evidence type="ECO:0000250" key="1"/>
<evidence type="ECO:0000255" key="2"/>
<evidence type="ECO:0000305" key="3"/>
<name>CSPL8_SOYBN</name>
<dbReference type="EMBL" id="BT090040">
    <property type="protein sequence ID" value="ACU14116.1"/>
    <property type="molecule type" value="mRNA"/>
</dbReference>
<dbReference type="RefSeq" id="NP_001237481.1">
    <property type="nucleotide sequence ID" value="NM_001250552.2"/>
</dbReference>
<dbReference type="SMR" id="C6SXZ3"/>
<dbReference type="FunCoup" id="C6SXZ3">
    <property type="interactions" value="377"/>
</dbReference>
<dbReference type="PaxDb" id="3847-GLYMA17G02600.1"/>
<dbReference type="GeneID" id="100306097"/>
<dbReference type="KEGG" id="gmx:100306097"/>
<dbReference type="eggNOG" id="ENOG502S2UF">
    <property type="taxonomic scope" value="Eukaryota"/>
</dbReference>
<dbReference type="InParanoid" id="C6SXZ3"/>
<dbReference type="OrthoDB" id="1926504at2759"/>
<dbReference type="Proteomes" id="UP000008827">
    <property type="component" value="Unplaced"/>
</dbReference>
<dbReference type="GO" id="GO:0005886">
    <property type="term" value="C:plasma membrane"/>
    <property type="evidence" value="ECO:0007669"/>
    <property type="project" value="UniProtKB-SubCell"/>
</dbReference>
<dbReference type="InterPro" id="IPR006459">
    <property type="entry name" value="CASP/CASPL"/>
</dbReference>
<dbReference type="InterPro" id="IPR006702">
    <property type="entry name" value="CASP_dom"/>
</dbReference>
<dbReference type="InterPro" id="IPR044173">
    <property type="entry name" value="CASPL"/>
</dbReference>
<dbReference type="NCBIfam" id="TIGR01569">
    <property type="entry name" value="A_tha_TIGR01569"/>
    <property type="match status" value="1"/>
</dbReference>
<dbReference type="PANTHER" id="PTHR36488">
    <property type="entry name" value="CASP-LIKE PROTEIN 1U1"/>
    <property type="match status" value="1"/>
</dbReference>
<dbReference type="PANTHER" id="PTHR36488:SF8">
    <property type="entry name" value="CASP-LIKE PROTEIN 1U1"/>
    <property type="match status" value="1"/>
</dbReference>
<dbReference type="Pfam" id="PF04535">
    <property type="entry name" value="CASP_dom"/>
    <property type="match status" value="1"/>
</dbReference>
<accession>C6SXZ3</accession>
<proteinExistence type="evidence at transcript level"/>
<keyword id="KW-1003">Cell membrane</keyword>
<keyword id="KW-0325">Glycoprotein</keyword>
<keyword id="KW-0472">Membrane</keyword>
<keyword id="KW-1185">Reference proteome</keyword>
<keyword id="KW-0812">Transmembrane</keyword>
<keyword id="KW-1133">Transmembrane helix</keyword>
<organism>
    <name type="scientific">Glycine max</name>
    <name type="common">Soybean</name>
    <name type="synonym">Glycine hispida</name>
    <dbReference type="NCBI Taxonomy" id="3847"/>
    <lineage>
        <taxon>Eukaryota</taxon>
        <taxon>Viridiplantae</taxon>
        <taxon>Streptophyta</taxon>
        <taxon>Embryophyta</taxon>
        <taxon>Tracheophyta</taxon>
        <taxon>Spermatophyta</taxon>
        <taxon>Magnoliopsida</taxon>
        <taxon>eudicotyledons</taxon>
        <taxon>Gunneridae</taxon>
        <taxon>Pentapetalae</taxon>
        <taxon>rosids</taxon>
        <taxon>fabids</taxon>
        <taxon>Fabales</taxon>
        <taxon>Fabaceae</taxon>
        <taxon>Papilionoideae</taxon>
        <taxon>50 kb inversion clade</taxon>
        <taxon>NPAAA clade</taxon>
        <taxon>indigoferoid/millettioid clade</taxon>
        <taxon>Phaseoleae</taxon>
        <taxon>Glycine</taxon>
        <taxon>Glycine subgen. Soja</taxon>
    </lineage>
</organism>
<feature type="chain" id="PRO_0000391567" description="CASP-like protein 1D1">
    <location>
        <begin position="1"/>
        <end position="193"/>
    </location>
</feature>
<feature type="topological domain" description="Cytoplasmic" evidence="2">
    <location>
        <begin position="1"/>
        <end position="30"/>
    </location>
</feature>
<feature type="transmembrane region" description="Helical" evidence="2">
    <location>
        <begin position="31"/>
        <end position="51"/>
    </location>
</feature>
<feature type="topological domain" description="Extracellular" evidence="2">
    <location>
        <begin position="52"/>
        <end position="73"/>
    </location>
</feature>
<feature type="transmembrane region" description="Helical" evidence="2">
    <location>
        <begin position="74"/>
        <end position="94"/>
    </location>
</feature>
<feature type="topological domain" description="Cytoplasmic" evidence="2">
    <location>
        <begin position="95"/>
        <end position="108"/>
    </location>
</feature>
<feature type="transmembrane region" description="Helical" evidence="2">
    <location>
        <begin position="109"/>
        <end position="129"/>
    </location>
</feature>
<feature type="topological domain" description="Extracellular" evidence="2">
    <location>
        <begin position="130"/>
        <end position="161"/>
    </location>
</feature>
<feature type="transmembrane region" description="Helical" evidence="2">
    <location>
        <begin position="162"/>
        <end position="182"/>
    </location>
</feature>
<feature type="topological domain" description="Cytoplasmic" evidence="2">
    <location>
        <begin position="183"/>
        <end position="193"/>
    </location>
</feature>
<feature type="glycosylation site" description="N-linked (GlcNAc...) asparagine" evidence="2">
    <location>
        <position position="52"/>
    </location>
</feature>